<proteinExistence type="inferred from homology"/>
<evidence type="ECO:0000255" key="1">
    <source>
        <dbReference type="HAMAP-Rule" id="MF_01393"/>
    </source>
</evidence>
<gene>
    <name evidence="1" type="primary">atpB</name>
    <name type="ordered locus">Gura_4248</name>
</gene>
<feature type="chain" id="PRO_0000362314" description="ATP synthase subunit a">
    <location>
        <begin position="1"/>
        <end position="229"/>
    </location>
</feature>
<feature type="transmembrane region" description="Helical" evidence="1">
    <location>
        <begin position="25"/>
        <end position="45"/>
    </location>
</feature>
<feature type="transmembrane region" description="Helical" evidence="1">
    <location>
        <begin position="82"/>
        <end position="102"/>
    </location>
</feature>
<feature type="transmembrane region" description="Helical" evidence="1">
    <location>
        <begin position="104"/>
        <end position="124"/>
    </location>
</feature>
<feature type="transmembrane region" description="Helical" evidence="1">
    <location>
        <begin position="142"/>
        <end position="162"/>
    </location>
</feature>
<feature type="transmembrane region" description="Helical" evidence="1">
    <location>
        <begin position="181"/>
        <end position="201"/>
    </location>
</feature>
<feature type="transmembrane region" description="Helical" evidence="1">
    <location>
        <begin position="202"/>
        <end position="222"/>
    </location>
</feature>
<protein>
    <recommendedName>
        <fullName evidence="1">ATP synthase subunit a</fullName>
    </recommendedName>
    <alternativeName>
        <fullName evidence="1">ATP synthase F0 sector subunit a</fullName>
    </alternativeName>
    <alternativeName>
        <fullName evidence="1">F-ATPase subunit 6</fullName>
    </alternativeName>
</protein>
<name>ATP6_GEOUR</name>
<comment type="function">
    <text evidence="1">Key component of the proton channel; it plays a direct role in the translocation of protons across the membrane.</text>
</comment>
<comment type="subunit">
    <text evidence="1">F-type ATPases have 2 components, CF(1) - the catalytic core - and CF(0) - the membrane proton channel. CF(1) has five subunits: alpha(3), beta(3), gamma(1), delta(1), epsilon(1). CF(0) has three main subunits: a(1), b(2) and c(9-12). The alpha and beta chains form an alternating ring which encloses part of the gamma chain. CF(1) is attached to CF(0) by a central stalk formed by the gamma and epsilon chains, while a peripheral stalk is formed by the delta and b chains.</text>
</comment>
<comment type="subcellular location">
    <subcellularLocation>
        <location evidence="1">Cell inner membrane</location>
        <topology evidence="1">Multi-pass membrane protein</topology>
    </subcellularLocation>
</comment>
<comment type="similarity">
    <text evidence="1">Belongs to the ATPase A chain family.</text>
</comment>
<accession>A5G9C3</accession>
<sequence>MVHPYLFLQFFRKLLEPLHISEAGADAIAYTWLIIALLLILSMLATKGLKTVPGGLQNFMEVIIGGVENMVVETMGHHGKPFFPLIATLAIFILVSNLIGLVPGFFPPTANINTTAACAVIVFVTTHVVGIKEHGFKYIKHFLGPILWLAPMMFFIEVIGHFSRVISLTLRLFGNMNGHELVLMIFFGLAPFLVPLPMMLMGVLVSFIQAFVFMLLAMIYIQGSLEEGH</sequence>
<dbReference type="EMBL" id="CP000698">
    <property type="protein sequence ID" value="ABQ28391.1"/>
    <property type="molecule type" value="Genomic_DNA"/>
</dbReference>
<dbReference type="RefSeq" id="WP_011941022.1">
    <property type="nucleotide sequence ID" value="NC_009483.1"/>
</dbReference>
<dbReference type="SMR" id="A5G9C3"/>
<dbReference type="STRING" id="351605.Gura_4248"/>
<dbReference type="KEGG" id="gur:Gura_4248"/>
<dbReference type="HOGENOM" id="CLU_041018_2_2_7"/>
<dbReference type="OrthoDB" id="9789241at2"/>
<dbReference type="Proteomes" id="UP000006695">
    <property type="component" value="Chromosome"/>
</dbReference>
<dbReference type="GO" id="GO:0005886">
    <property type="term" value="C:plasma membrane"/>
    <property type="evidence" value="ECO:0007669"/>
    <property type="project" value="UniProtKB-SubCell"/>
</dbReference>
<dbReference type="GO" id="GO:0045259">
    <property type="term" value="C:proton-transporting ATP synthase complex"/>
    <property type="evidence" value="ECO:0007669"/>
    <property type="project" value="UniProtKB-KW"/>
</dbReference>
<dbReference type="GO" id="GO:0046933">
    <property type="term" value="F:proton-transporting ATP synthase activity, rotational mechanism"/>
    <property type="evidence" value="ECO:0007669"/>
    <property type="project" value="UniProtKB-UniRule"/>
</dbReference>
<dbReference type="GO" id="GO:0042777">
    <property type="term" value="P:proton motive force-driven plasma membrane ATP synthesis"/>
    <property type="evidence" value="ECO:0007669"/>
    <property type="project" value="TreeGrafter"/>
</dbReference>
<dbReference type="CDD" id="cd00310">
    <property type="entry name" value="ATP-synt_Fo_a_6"/>
    <property type="match status" value="1"/>
</dbReference>
<dbReference type="FunFam" id="1.20.120.220:FF:000006">
    <property type="entry name" value="ATP synthase subunit a"/>
    <property type="match status" value="1"/>
</dbReference>
<dbReference type="Gene3D" id="1.20.120.220">
    <property type="entry name" value="ATP synthase, F0 complex, subunit A"/>
    <property type="match status" value="1"/>
</dbReference>
<dbReference type="HAMAP" id="MF_01393">
    <property type="entry name" value="ATP_synth_a_bact"/>
    <property type="match status" value="1"/>
</dbReference>
<dbReference type="InterPro" id="IPR045082">
    <property type="entry name" value="ATP_syn_F0_a_bact/chloroplast"/>
</dbReference>
<dbReference type="InterPro" id="IPR000568">
    <property type="entry name" value="ATP_synth_F0_asu"/>
</dbReference>
<dbReference type="InterPro" id="IPR023011">
    <property type="entry name" value="ATP_synth_F0_asu_AS"/>
</dbReference>
<dbReference type="InterPro" id="IPR035908">
    <property type="entry name" value="F0_ATP_A_sf"/>
</dbReference>
<dbReference type="NCBIfam" id="TIGR01131">
    <property type="entry name" value="ATP_synt_6_or_A"/>
    <property type="match status" value="1"/>
</dbReference>
<dbReference type="PANTHER" id="PTHR42823">
    <property type="entry name" value="ATP SYNTHASE SUBUNIT A, CHLOROPLASTIC"/>
    <property type="match status" value="1"/>
</dbReference>
<dbReference type="PANTHER" id="PTHR42823:SF3">
    <property type="entry name" value="ATP SYNTHASE SUBUNIT A, CHLOROPLASTIC"/>
    <property type="match status" value="1"/>
</dbReference>
<dbReference type="Pfam" id="PF00119">
    <property type="entry name" value="ATP-synt_A"/>
    <property type="match status" value="1"/>
</dbReference>
<dbReference type="PRINTS" id="PR00123">
    <property type="entry name" value="ATPASEA"/>
</dbReference>
<dbReference type="SUPFAM" id="SSF81336">
    <property type="entry name" value="F1F0 ATP synthase subunit A"/>
    <property type="match status" value="1"/>
</dbReference>
<dbReference type="PROSITE" id="PS00449">
    <property type="entry name" value="ATPASE_A"/>
    <property type="match status" value="1"/>
</dbReference>
<organism>
    <name type="scientific">Geotalea uraniireducens (strain Rf4)</name>
    <name type="common">Geobacter uraniireducens</name>
    <dbReference type="NCBI Taxonomy" id="351605"/>
    <lineage>
        <taxon>Bacteria</taxon>
        <taxon>Pseudomonadati</taxon>
        <taxon>Thermodesulfobacteriota</taxon>
        <taxon>Desulfuromonadia</taxon>
        <taxon>Geobacterales</taxon>
        <taxon>Geobacteraceae</taxon>
        <taxon>Geotalea</taxon>
    </lineage>
</organism>
<reference key="1">
    <citation type="submission" date="2007-05" db="EMBL/GenBank/DDBJ databases">
        <title>Complete sequence of Geobacter uraniireducens Rf4.</title>
        <authorList>
            <consortium name="US DOE Joint Genome Institute"/>
            <person name="Copeland A."/>
            <person name="Lucas S."/>
            <person name="Lapidus A."/>
            <person name="Barry K."/>
            <person name="Detter J.C."/>
            <person name="Glavina del Rio T."/>
            <person name="Hammon N."/>
            <person name="Israni S."/>
            <person name="Dalin E."/>
            <person name="Tice H."/>
            <person name="Pitluck S."/>
            <person name="Chertkov O."/>
            <person name="Brettin T."/>
            <person name="Bruce D."/>
            <person name="Han C."/>
            <person name="Schmutz J."/>
            <person name="Larimer F."/>
            <person name="Land M."/>
            <person name="Hauser L."/>
            <person name="Kyrpides N."/>
            <person name="Mikhailova N."/>
            <person name="Shelobolina E."/>
            <person name="Aklujkar M."/>
            <person name="Lovley D."/>
            <person name="Richardson P."/>
        </authorList>
    </citation>
    <scope>NUCLEOTIDE SEQUENCE [LARGE SCALE GENOMIC DNA]</scope>
    <source>
        <strain>ATCC BAA-1134 / JCM 13001 / Rf4</strain>
    </source>
</reference>
<keyword id="KW-0066">ATP synthesis</keyword>
<keyword id="KW-0997">Cell inner membrane</keyword>
<keyword id="KW-1003">Cell membrane</keyword>
<keyword id="KW-0138">CF(0)</keyword>
<keyword id="KW-0375">Hydrogen ion transport</keyword>
<keyword id="KW-0406">Ion transport</keyword>
<keyword id="KW-0472">Membrane</keyword>
<keyword id="KW-1185">Reference proteome</keyword>
<keyword id="KW-0812">Transmembrane</keyword>
<keyword id="KW-1133">Transmembrane helix</keyword>
<keyword id="KW-0813">Transport</keyword>